<protein>
    <recommendedName>
        <fullName>Protein VraC</fullName>
    </recommendedName>
</protein>
<sequence length="121" mass="14187">MQHYLLDSNQRLNVSFSKDSVAAYYQCFNQPYRKEVPPLMCASLWPKFDLFKKYANSELILTKSAINQTQKIEVDTIYVGHLEDIECRQTRNITRYTMALTLTKNDQHVITVTQTFIKAMK</sequence>
<dbReference type="EMBL" id="CP000046">
    <property type="protein sequence ID" value="AAW37732.1"/>
    <property type="molecule type" value="Genomic_DNA"/>
</dbReference>
<dbReference type="RefSeq" id="WP_001165058.1">
    <property type="nucleotide sequence ID" value="NZ_JBGOFO010000005.1"/>
</dbReference>
<dbReference type="SMR" id="Q5HI99"/>
<dbReference type="KEGG" id="sac:SACOL0623"/>
<dbReference type="HOGENOM" id="CLU_2195295_0_0_9"/>
<dbReference type="Proteomes" id="UP000000530">
    <property type="component" value="Chromosome"/>
</dbReference>
<dbReference type="InterPro" id="IPR016994">
    <property type="entry name" value="UCP032370_VraC"/>
</dbReference>
<dbReference type="PIRSF" id="PIRSF032370">
    <property type="entry name" value="UCP032370_VraC"/>
    <property type="match status" value="1"/>
</dbReference>
<organism>
    <name type="scientific">Staphylococcus aureus (strain COL)</name>
    <dbReference type="NCBI Taxonomy" id="93062"/>
    <lineage>
        <taxon>Bacteria</taxon>
        <taxon>Bacillati</taxon>
        <taxon>Bacillota</taxon>
        <taxon>Bacilli</taxon>
        <taxon>Bacillales</taxon>
        <taxon>Staphylococcaceae</taxon>
        <taxon>Staphylococcus</taxon>
    </lineage>
</organism>
<name>VRAC_STAAC</name>
<proteinExistence type="predicted"/>
<accession>Q5HI99</accession>
<reference key="1">
    <citation type="journal article" date="2005" name="J. Bacteriol.">
        <title>Insights on evolution of virulence and resistance from the complete genome analysis of an early methicillin-resistant Staphylococcus aureus strain and a biofilm-producing methicillin-resistant Staphylococcus epidermidis strain.</title>
        <authorList>
            <person name="Gill S.R."/>
            <person name="Fouts D.E."/>
            <person name="Archer G.L."/>
            <person name="Mongodin E.F."/>
            <person name="DeBoy R.T."/>
            <person name="Ravel J."/>
            <person name="Paulsen I.T."/>
            <person name="Kolonay J.F."/>
            <person name="Brinkac L.M."/>
            <person name="Beanan M.J."/>
            <person name="Dodson R.J."/>
            <person name="Daugherty S.C."/>
            <person name="Madupu R."/>
            <person name="Angiuoli S.V."/>
            <person name="Durkin A.S."/>
            <person name="Haft D.H."/>
            <person name="Vamathevan J.J."/>
            <person name="Khouri H."/>
            <person name="Utterback T.R."/>
            <person name="Lee C."/>
            <person name="Dimitrov G."/>
            <person name="Jiang L."/>
            <person name="Qin H."/>
            <person name="Weidman J."/>
            <person name="Tran K."/>
            <person name="Kang K.H."/>
            <person name="Hance I.R."/>
            <person name="Nelson K.E."/>
            <person name="Fraser C.M."/>
        </authorList>
    </citation>
    <scope>NUCLEOTIDE SEQUENCE [LARGE SCALE GENOMIC DNA]</scope>
    <source>
        <strain>COL</strain>
    </source>
</reference>
<gene>
    <name type="primary">vraC</name>
    <name type="ordered locus">SACOL0623</name>
</gene>
<feature type="chain" id="PRO_0000065910" description="Protein VraC">
    <location>
        <begin position="1"/>
        <end position="121"/>
    </location>
</feature>